<geneLocation type="plasmid">
    <name>megaplasmid Rsp</name>
</geneLocation>
<evidence type="ECO:0000255" key="1">
    <source>
        <dbReference type="HAMAP-Rule" id="MF_00725"/>
    </source>
</evidence>
<dbReference type="EMBL" id="AL646053">
    <property type="protein sequence ID" value="CAD18564.1"/>
    <property type="molecule type" value="Genomic_DNA"/>
</dbReference>
<dbReference type="RefSeq" id="WP_003263508.1">
    <property type="nucleotide sequence ID" value="NC_003296.1"/>
</dbReference>
<dbReference type="SMR" id="Q8XQ73"/>
<dbReference type="STRING" id="267608.RSp1413"/>
<dbReference type="EnsemblBacteria" id="CAD18564">
    <property type="protein sequence ID" value="CAD18564"/>
    <property type="gene ID" value="RSp1413"/>
</dbReference>
<dbReference type="GeneID" id="93849765"/>
<dbReference type="KEGG" id="rso:RSp1413"/>
<dbReference type="eggNOG" id="ENOG5032UUS">
    <property type="taxonomic scope" value="Bacteria"/>
</dbReference>
<dbReference type="HOGENOM" id="CLU_144160_1_0_4"/>
<dbReference type="Proteomes" id="UP000001436">
    <property type="component" value="Plasmid megaplasmid Rsp"/>
</dbReference>
<dbReference type="GO" id="GO:0005737">
    <property type="term" value="C:cytoplasm"/>
    <property type="evidence" value="ECO:0007669"/>
    <property type="project" value="UniProtKB-SubCell"/>
</dbReference>
<dbReference type="GO" id="GO:0003677">
    <property type="term" value="F:DNA binding"/>
    <property type="evidence" value="ECO:0007669"/>
    <property type="project" value="UniProtKB-UniRule"/>
</dbReference>
<dbReference type="GO" id="GO:0044780">
    <property type="term" value="P:bacterial-type flagellum assembly"/>
    <property type="evidence" value="ECO:0007669"/>
    <property type="project" value="InterPro"/>
</dbReference>
<dbReference type="GO" id="GO:0045893">
    <property type="term" value="P:positive regulation of DNA-templated transcription"/>
    <property type="evidence" value="ECO:0007669"/>
    <property type="project" value="InterPro"/>
</dbReference>
<dbReference type="GO" id="GO:1902208">
    <property type="term" value="P:regulation of bacterial-type flagellum assembly"/>
    <property type="evidence" value="ECO:0007669"/>
    <property type="project" value="UniProtKB-UniRule"/>
</dbReference>
<dbReference type="Gene3D" id="1.10.4000.10">
    <property type="entry name" value="Flagellar transcriptional activator FlhD"/>
    <property type="match status" value="1"/>
</dbReference>
<dbReference type="HAMAP" id="MF_00725">
    <property type="entry name" value="FlhD"/>
    <property type="match status" value="1"/>
</dbReference>
<dbReference type="InterPro" id="IPR023559">
    <property type="entry name" value="Flagellar_FlhD"/>
</dbReference>
<dbReference type="InterPro" id="IPR036194">
    <property type="entry name" value="FlhD_sf"/>
</dbReference>
<dbReference type="NCBIfam" id="NF002783">
    <property type="entry name" value="PRK02909.1-1"/>
    <property type="match status" value="1"/>
</dbReference>
<dbReference type="Pfam" id="PF05247">
    <property type="entry name" value="FlhD"/>
    <property type="match status" value="1"/>
</dbReference>
<dbReference type="SUPFAM" id="SSF63592">
    <property type="entry name" value="Flagellar transcriptional activator FlhD"/>
    <property type="match status" value="1"/>
</dbReference>
<proteinExistence type="inferred from homology"/>
<accession>Q8XQ73</accession>
<keyword id="KW-0010">Activator</keyword>
<keyword id="KW-1005">Bacterial flagellum biogenesis</keyword>
<keyword id="KW-0963">Cytoplasm</keyword>
<keyword id="KW-1015">Disulfide bond</keyword>
<keyword id="KW-0238">DNA-binding</keyword>
<keyword id="KW-0614">Plasmid</keyword>
<keyword id="KW-1185">Reference proteome</keyword>
<keyword id="KW-0804">Transcription</keyword>
<keyword id="KW-0805">Transcription regulation</keyword>
<comment type="function">
    <text evidence="1">Functions in complex with FlhC as a master transcriptional regulator that regulates transcription of several flagellar and non-flagellar operons by binding to their promoter region. Activates expression of class 2 flagellar genes, including fliA, which is a flagellum-specific sigma factor that turns on the class 3 genes. Also regulates genes whose products function in a variety of physiological pathways.</text>
</comment>
<comment type="subunit">
    <text evidence="1">Homodimer; disulfide-linked. Forms a heterohexamer composed of two FlhC and four FlhD subunits. Each FlhC binds a FlhD dimer, forming a heterotrimer, and a hexamer assembles by dimerization of two heterotrimers.</text>
</comment>
<comment type="subcellular location">
    <subcellularLocation>
        <location evidence="1">Cytoplasm</location>
    </subcellularLocation>
</comment>
<comment type="domain">
    <text evidence="1">The C-terminal region contains a putative helix-turn-helix (HTH) motif, suggesting that this region may bind DNA.</text>
</comment>
<comment type="similarity">
    <text evidence="1">Belongs to the FlhD family.</text>
</comment>
<organism>
    <name type="scientific">Ralstonia nicotianae (strain ATCC BAA-1114 / GMI1000)</name>
    <name type="common">Ralstonia solanacearum</name>
    <dbReference type="NCBI Taxonomy" id="267608"/>
    <lineage>
        <taxon>Bacteria</taxon>
        <taxon>Pseudomonadati</taxon>
        <taxon>Pseudomonadota</taxon>
        <taxon>Betaproteobacteria</taxon>
        <taxon>Burkholderiales</taxon>
        <taxon>Burkholderiaceae</taxon>
        <taxon>Ralstonia</taxon>
        <taxon>Ralstonia solanacearum species complex</taxon>
    </lineage>
</organism>
<feature type="chain" id="PRO_0000182722" description="Flagellar transcriptional regulator FlhD">
    <location>
        <begin position="1"/>
        <end position="105"/>
    </location>
</feature>
<feature type="disulfide bond" description="Interchain" evidence="1">
    <location>
        <position position="65"/>
    </location>
</feature>
<gene>
    <name evidence="1" type="primary">flhD</name>
    <name type="ordered locus">RSp1413</name>
    <name type="ORF">RS03127</name>
</gene>
<protein>
    <recommendedName>
        <fullName evidence="1">Flagellar transcriptional regulator FlhD</fullName>
    </recommendedName>
</protein>
<name>FLHD_RALN1</name>
<reference key="1">
    <citation type="journal article" date="2002" name="Nature">
        <title>Genome sequence of the plant pathogen Ralstonia solanacearum.</title>
        <authorList>
            <person name="Salanoubat M."/>
            <person name="Genin S."/>
            <person name="Artiguenave F."/>
            <person name="Gouzy J."/>
            <person name="Mangenot S."/>
            <person name="Arlat M."/>
            <person name="Billault A."/>
            <person name="Brottier P."/>
            <person name="Camus J.-C."/>
            <person name="Cattolico L."/>
            <person name="Chandler M."/>
            <person name="Choisne N."/>
            <person name="Claudel-Renard C."/>
            <person name="Cunnac S."/>
            <person name="Demange N."/>
            <person name="Gaspin C."/>
            <person name="Lavie M."/>
            <person name="Moisan A."/>
            <person name="Robert C."/>
            <person name="Saurin W."/>
            <person name="Schiex T."/>
            <person name="Siguier P."/>
            <person name="Thebault P."/>
            <person name="Whalen M."/>
            <person name="Wincker P."/>
            <person name="Levy M."/>
            <person name="Weissenbach J."/>
            <person name="Boucher C.A."/>
        </authorList>
    </citation>
    <scope>NUCLEOTIDE SEQUENCE [LARGE SCALE GENOMIC DNA]</scope>
    <source>
        <strain>ATCC BAA-1114 / GMI1000</strain>
    </source>
</reference>
<sequence>MDTQDIVSEISELNLTYLMLAQQMLAKDRDAALFRLGISEELADILLTMSPAQIVKLASTNMLLCRFRFDDHAILGLVTQPHRDKGLQQSQMSILLARQAVEQIN</sequence>